<protein>
    <recommendedName>
        <fullName evidence="1">Proline--tRNA ligase</fullName>
        <ecNumber evidence="1">6.1.1.15</ecNumber>
    </recommendedName>
    <alternativeName>
        <fullName evidence="1">Prolyl-tRNA synthetase</fullName>
        <shortName evidence="1">ProRS</shortName>
    </alternativeName>
</protein>
<proteinExistence type="inferred from homology"/>
<sequence length="567" mass="63863">MKQSKVFIPTMRDVPSEAEAQSHRLLLKSGLIKQSTSGIYSYLPLATRVLNNITAIVRQEMERIDSVEILMPALQQAELWEESGRWGAYGPELMRLQDRHGRQFALGPTHEELVTSIVRNELKSYKQLPMTLFQIQSKFRDEKRPRFGLLRGREFIMKDAYSFHADEASLDQTYQDMYQAYSRIFERVGINARPVVADSGAIGGSHTHEFMALSAIGEDTIVYSKESDYAANIEKAEVVYEPNHKHTTVQPLEKIETPNVKTAQELADFLGRPVDEIVKTMIFKVDGEYIMVLVRGHHEINDIKLKSYFGTDNIELATQDEIVNLVGANPGSLGPVIDKEIKIYADNFVQDLNNLVVGANEDGYHLINVNVGRDFNVDEYGDFRFILEGEKLSDGSGVAHFAEGIEVGQVFKLGTKYSESMNATFLDNQGKAQSLIMGCYGIGISRTLSAIVEQNHDDNGIVWPKSVTPFDLHLISINPKKDDQRELADALYAEFNTKFDVLYDDRQERAGVKFNDADLIGLPLRIVVGKRASEGIVEVKERLTGDSEEVHIDDLMTVITNKYDNLK</sequence>
<keyword id="KW-0030">Aminoacyl-tRNA synthetase</keyword>
<keyword id="KW-0067">ATP-binding</keyword>
<keyword id="KW-0963">Cytoplasm</keyword>
<keyword id="KW-0436">Ligase</keyword>
<keyword id="KW-0547">Nucleotide-binding</keyword>
<keyword id="KW-0648">Protein biosynthesis</keyword>
<keyword id="KW-1185">Reference proteome</keyword>
<name>SYP_STAA8</name>
<accession>Q2G1Z4</accession>
<comment type="function">
    <text evidence="1">Catalyzes the attachment of proline to tRNA(Pro) in a two-step reaction: proline is first activated by ATP to form Pro-AMP and then transferred to the acceptor end of tRNA(Pro). As ProRS can inadvertently accommodate and process non-cognate amino acids such as alanine and cysteine, to avoid such errors it has two additional distinct editing activities against alanine. One activity is designated as 'pretransfer' editing and involves the tRNA(Pro)-independent hydrolysis of activated Ala-AMP. The other activity is designated 'posttransfer' editing and involves deacylation of mischarged Ala-tRNA(Pro). The misacylated Cys-tRNA(Pro) is not edited by ProRS.</text>
</comment>
<comment type="catalytic activity">
    <reaction evidence="1">
        <text>tRNA(Pro) + L-proline + ATP = L-prolyl-tRNA(Pro) + AMP + diphosphate</text>
        <dbReference type="Rhea" id="RHEA:14305"/>
        <dbReference type="Rhea" id="RHEA-COMP:9700"/>
        <dbReference type="Rhea" id="RHEA-COMP:9702"/>
        <dbReference type="ChEBI" id="CHEBI:30616"/>
        <dbReference type="ChEBI" id="CHEBI:33019"/>
        <dbReference type="ChEBI" id="CHEBI:60039"/>
        <dbReference type="ChEBI" id="CHEBI:78442"/>
        <dbReference type="ChEBI" id="CHEBI:78532"/>
        <dbReference type="ChEBI" id="CHEBI:456215"/>
        <dbReference type="EC" id="6.1.1.15"/>
    </reaction>
</comment>
<comment type="subunit">
    <text evidence="1">Homodimer.</text>
</comment>
<comment type="subcellular location">
    <subcellularLocation>
        <location evidence="1">Cytoplasm</location>
    </subcellularLocation>
</comment>
<comment type="domain">
    <text evidence="1">Consists of three domains: the N-terminal catalytic domain, the editing domain and the C-terminal anticodon-binding domain.</text>
</comment>
<comment type="similarity">
    <text evidence="1">Belongs to the class-II aminoacyl-tRNA synthetase family. ProS type 1 subfamily.</text>
</comment>
<gene>
    <name evidence="1" type="primary">proS</name>
    <name type="ordered locus">SAOUHSC_01240</name>
</gene>
<evidence type="ECO:0000255" key="1">
    <source>
        <dbReference type="HAMAP-Rule" id="MF_01569"/>
    </source>
</evidence>
<organism>
    <name type="scientific">Staphylococcus aureus (strain NCTC 8325 / PS 47)</name>
    <dbReference type="NCBI Taxonomy" id="93061"/>
    <lineage>
        <taxon>Bacteria</taxon>
        <taxon>Bacillati</taxon>
        <taxon>Bacillota</taxon>
        <taxon>Bacilli</taxon>
        <taxon>Bacillales</taxon>
        <taxon>Staphylococcaceae</taxon>
        <taxon>Staphylococcus</taxon>
    </lineage>
</organism>
<feature type="chain" id="PRO_0000248769" description="Proline--tRNA ligase">
    <location>
        <begin position="1"/>
        <end position="567"/>
    </location>
</feature>
<dbReference type="EC" id="6.1.1.15" evidence="1"/>
<dbReference type="EMBL" id="CP000253">
    <property type="protein sequence ID" value="ABD30341.1"/>
    <property type="molecule type" value="Genomic_DNA"/>
</dbReference>
<dbReference type="RefSeq" id="WP_000814103.1">
    <property type="nucleotide sequence ID" value="NZ_LS483365.1"/>
</dbReference>
<dbReference type="RefSeq" id="YP_499773.1">
    <property type="nucleotide sequence ID" value="NC_007795.1"/>
</dbReference>
<dbReference type="SMR" id="Q2G1Z4"/>
<dbReference type="STRING" id="93061.SAOUHSC_01240"/>
<dbReference type="PaxDb" id="1280-SAXN108_1267"/>
<dbReference type="GeneID" id="3920265"/>
<dbReference type="KEGG" id="sao:SAOUHSC_01240"/>
<dbReference type="PATRIC" id="fig|93061.5.peg.1134"/>
<dbReference type="eggNOG" id="COG0442">
    <property type="taxonomic scope" value="Bacteria"/>
</dbReference>
<dbReference type="HOGENOM" id="CLU_016739_0_0_9"/>
<dbReference type="OrthoDB" id="9809052at2"/>
<dbReference type="PRO" id="PR:Q2G1Z4"/>
<dbReference type="Proteomes" id="UP000008816">
    <property type="component" value="Chromosome"/>
</dbReference>
<dbReference type="GO" id="GO:0005829">
    <property type="term" value="C:cytosol"/>
    <property type="evidence" value="ECO:0000318"/>
    <property type="project" value="GO_Central"/>
</dbReference>
<dbReference type="GO" id="GO:0002161">
    <property type="term" value="F:aminoacyl-tRNA deacylase activity"/>
    <property type="evidence" value="ECO:0007669"/>
    <property type="project" value="InterPro"/>
</dbReference>
<dbReference type="GO" id="GO:0005524">
    <property type="term" value="F:ATP binding"/>
    <property type="evidence" value="ECO:0007669"/>
    <property type="project" value="UniProtKB-UniRule"/>
</dbReference>
<dbReference type="GO" id="GO:0140096">
    <property type="term" value="F:catalytic activity, acting on a protein"/>
    <property type="evidence" value="ECO:0007669"/>
    <property type="project" value="UniProtKB-ARBA"/>
</dbReference>
<dbReference type="GO" id="GO:0004827">
    <property type="term" value="F:proline-tRNA ligase activity"/>
    <property type="evidence" value="ECO:0000318"/>
    <property type="project" value="GO_Central"/>
</dbReference>
<dbReference type="GO" id="GO:0016740">
    <property type="term" value="F:transferase activity"/>
    <property type="evidence" value="ECO:0007669"/>
    <property type="project" value="UniProtKB-ARBA"/>
</dbReference>
<dbReference type="GO" id="GO:0006433">
    <property type="term" value="P:prolyl-tRNA aminoacylation"/>
    <property type="evidence" value="ECO:0000318"/>
    <property type="project" value="GO_Central"/>
</dbReference>
<dbReference type="CDD" id="cd04334">
    <property type="entry name" value="ProRS-INS"/>
    <property type="match status" value="1"/>
</dbReference>
<dbReference type="CDD" id="cd00861">
    <property type="entry name" value="ProRS_anticodon_short"/>
    <property type="match status" value="1"/>
</dbReference>
<dbReference type="CDD" id="cd00779">
    <property type="entry name" value="ProRS_core_prok"/>
    <property type="match status" value="1"/>
</dbReference>
<dbReference type="FunFam" id="3.30.930.10:FF:000043">
    <property type="entry name" value="Proline--tRNA ligase"/>
    <property type="match status" value="1"/>
</dbReference>
<dbReference type="FunFam" id="3.40.50.800:FF:000011">
    <property type="entry name" value="Proline--tRNA ligase"/>
    <property type="match status" value="1"/>
</dbReference>
<dbReference type="Gene3D" id="3.40.50.800">
    <property type="entry name" value="Anticodon-binding domain"/>
    <property type="match status" value="1"/>
</dbReference>
<dbReference type="Gene3D" id="3.30.930.10">
    <property type="entry name" value="Bira Bifunctional Protein, Domain 2"/>
    <property type="match status" value="2"/>
</dbReference>
<dbReference type="Gene3D" id="3.90.960.10">
    <property type="entry name" value="YbaK/aminoacyl-tRNA synthetase-associated domain"/>
    <property type="match status" value="1"/>
</dbReference>
<dbReference type="HAMAP" id="MF_01569">
    <property type="entry name" value="Pro_tRNA_synth_type1"/>
    <property type="match status" value="1"/>
</dbReference>
<dbReference type="InterPro" id="IPR002314">
    <property type="entry name" value="aa-tRNA-synt_IIb"/>
</dbReference>
<dbReference type="InterPro" id="IPR006195">
    <property type="entry name" value="aa-tRNA-synth_II"/>
</dbReference>
<dbReference type="InterPro" id="IPR045864">
    <property type="entry name" value="aa-tRNA-synth_II/BPL/LPL"/>
</dbReference>
<dbReference type="InterPro" id="IPR004154">
    <property type="entry name" value="Anticodon-bd"/>
</dbReference>
<dbReference type="InterPro" id="IPR036621">
    <property type="entry name" value="Anticodon-bd_dom_sf"/>
</dbReference>
<dbReference type="InterPro" id="IPR002316">
    <property type="entry name" value="Pro-tRNA-ligase_IIa"/>
</dbReference>
<dbReference type="InterPro" id="IPR004500">
    <property type="entry name" value="Pro-tRNA-synth_IIa_bac-type"/>
</dbReference>
<dbReference type="InterPro" id="IPR023717">
    <property type="entry name" value="Pro-tRNA-Synthase_IIa_type1"/>
</dbReference>
<dbReference type="InterPro" id="IPR050062">
    <property type="entry name" value="Pro-tRNA_synthetase"/>
</dbReference>
<dbReference type="InterPro" id="IPR044140">
    <property type="entry name" value="ProRS_anticodon_short"/>
</dbReference>
<dbReference type="InterPro" id="IPR033730">
    <property type="entry name" value="ProRS_core_prok"/>
</dbReference>
<dbReference type="InterPro" id="IPR036754">
    <property type="entry name" value="YbaK/aa-tRNA-synt-asso_dom_sf"/>
</dbReference>
<dbReference type="InterPro" id="IPR007214">
    <property type="entry name" value="YbaK/aa-tRNA-synth-assoc-dom"/>
</dbReference>
<dbReference type="NCBIfam" id="NF006625">
    <property type="entry name" value="PRK09194.1"/>
    <property type="match status" value="1"/>
</dbReference>
<dbReference type="NCBIfam" id="TIGR00409">
    <property type="entry name" value="proS_fam_II"/>
    <property type="match status" value="1"/>
</dbReference>
<dbReference type="PANTHER" id="PTHR42753">
    <property type="entry name" value="MITOCHONDRIAL RIBOSOME PROTEIN L39/PROLYL-TRNA LIGASE FAMILY MEMBER"/>
    <property type="match status" value="1"/>
</dbReference>
<dbReference type="PANTHER" id="PTHR42753:SF2">
    <property type="entry name" value="PROLINE--TRNA LIGASE"/>
    <property type="match status" value="1"/>
</dbReference>
<dbReference type="Pfam" id="PF03129">
    <property type="entry name" value="HGTP_anticodon"/>
    <property type="match status" value="1"/>
</dbReference>
<dbReference type="Pfam" id="PF00587">
    <property type="entry name" value="tRNA-synt_2b"/>
    <property type="match status" value="1"/>
</dbReference>
<dbReference type="Pfam" id="PF04073">
    <property type="entry name" value="tRNA_edit"/>
    <property type="match status" value="1"/>
</dbReference>
<dbReference type="PRINTS" id="PR01046">
    <property type="entry name" value="TRNASYNTHPRO"/>
</dbReference>
<dbReference type="SUPFAM" id="SSF52954">
    <property type="entry name" value="Class II aaRS ABD-related"/>
    <property type="match status" value="1"/>
</dbReference>
<dbReference type="SUPFAM" id="SSF55681">
    <property type="entry name" value="Class II aaRS and biotin synthetases"/>
    <property type="match status" value="1"/>
</dbReference>
<dbReference type="SUPFAM" id="SSF55826">
    <property type="entry name" value="YbaK/ProRS associated domain"/>
    <property type="match status" value="1"/>
</dbReference>
<dbReference type="PROSITE" id="PS50862">
    <property type="entry name" value="AA_TRNA_LIGASE_II"/>
    <property type="match status" value="1"/>
</dbReference>
<reference key="1">
    <citation type="book" date="2006" name="Gram positive pathogens, 2nd edition">
        <title>The Staphylococcus aureus NCTC 8325 genome.</title>
        <editorList>
            <person name="Fischetti V."/>
            <person name="Novick R."/>
            <person name="Ferretti J."/>
            <person name="Portnoy D."/>
            <person name="Rood J."/>
        </editorList>
        <authorList>
            <person name="Gillaspy A.F."/>
            <person name="Worrell V."/>
            <person name="Orvis J."/>
            <person name="Roe B.A."/>
            <person name="Dyer D.W."/>
            <person name="Iandolo J.J."/>
        </authorList>
    </citation>
    <scope>NUCLEOTIDE SEQUENCE [LARGE SCALE GENOMIC DNA]</scope>
    <source>
        <strain>NCTC 8325 / PS 47</strain>
    </source>
</reference>